<organism>
    <name type="scientific">Corynebacterium efficiens (strain DSM 44549 / YS-314 / AJ 12310 / JCM 11189 / NBRC 100395)</name>
    <dbReference type="NCBI Taxonomy" id="196164"/>
    <lineage>
        <taxon>Bacteria</taxon>
        <taxon>Bacillati</taxon>
        <taxon>Actinomycetota</taxon>
        <taxon>Actinomycetes</taxon>
        <taxon>Mycobacteriales</taxon>
        <taxon>Corynebacteriaceae</taxon>
        <taxon>Corynebacterium</taxon>
    </lineage>
</organism>
<reference key="1">
    <citation type="journal article" date="2003" name="Genome Res.">
        <title>Comparative complete genome sequence analysis of the amino acid replacements responsible for the thermostability of Corynebacterium efficiens.</title>
        <authorList>
            <person name="Nishio Y."/>
            <person name="Nakamura Y."/>
            <person name="Kawarabayasi Y."/>
            <person name="Usuda Y."/>
            <person name="Kimura E."/>
            <person name="Sugimoto S."/>
            <person name="Matsui K."/>
            <person name="Yamagishi A."/>
            <person name="Kikuchi H."/>
            <person name="Ikeo K."/>
            <person name="Gojobori T."/>
        </authorList>
    </citation>
    <scope>NUCLEOTIDE SEQUENCE [LARGE SCALE GENOMIC DNA]</scope>
    <source>
        <strain>DSM 44549 / YS-314 / AJ 12310 / JCM 11189 / NBRC 100395</strain>
    </source>
</reference>
<name>COBT_COREF</name>
<evidence type="ECO:0000255" key="1">
    <source>
        <dbReference type="HAMAP-Rule" id="MF_00230"/>
    </source>
</evidence>
<evidence type="ECO:0000256" key="2">
    <source>
        <dbReference type="SAM" id="MobiDB-lite"/>
    </source>
</evidence>
<protein>
    <recommendedName>
        <fullName evidence="1">Nicotinate-nucleotide--dimethylbenzimidazole phosphoribosyltransferase</fullName>
        <shortName evidence="1">NN:DBI PRT</shortName>
        <ecNumber evidence="1">2.4.2.21</ecNumber>
    </recommendedName>
    <alternativeName>
        <fullName evidence="1">N(1)-alpha-phosphoribosyltransferase</fullName>
    </alternativeName>
</protein>
<keyword id="KW-0169">Cobalamin biosynthesis</keyword>
<keyword id="KW-0328">Glycosyltransferase</keyword>
<keyword id="KW-1185">Reference proteome</keyword>
<keyword id="KW-0808">Transferase</keyword>
<dbReference type="EC" id="2.4.2.21" evidence="1"/>
<dbReference type="EMBL" id="BA000035">
    <property type="protein sequence ID" value="BAC18902.1"/>
    <property type="molecule type" value="Genomic_DNA"/>
</dbReference>
<dbReference type="SMR" id="Q8FNQ2"/>
<dbReference type="STRING" id="196164.gene:10742520"/>
<dbReference type="KEGG" id="cef:CE2092"/>
<dbReference type="eggNOG" id="COG2038">
    <property type="taxonomic scope" value="Bacteria"/>
</dbReference>
<dbReference type="HOGENOM" id="CLU_002982_0_2_11"/>
<dbReference type="UniPathway" id="UPA00061">
    <property type="reaction ID" value="UER00516"/>
</dbReference>
<dbReference type="Proteomes" id="UP000001409">
    <property type="component" value="Chromosome"/>
</dbReference>
<dbReference type="GO" id="GO:0008939">
    <property type="term" value="F:nicotinate-nucleotide-dimethylbenzimidazole phosphoribosyltransferase activity"/>
    <property type="evidence" value="ECO:0007669"/>
    <property type="project" value="UniProtKB-UniRule"/>
</dbReference>
<dbReference type="GO" id="GO:0009236">
    <property type="term" value="P:cobalamin biosynthetic process"/>
    <property type="evidence" value="ECO:0007669"/>
    <property type="project" value="UniProtKB-KW"/>
</dbReference>
<dbReference type="CDD" id="cd02439">
    <property type="entry name" value="DMB-PRT_CobT"/>
    <property type="match status" value="1"/>
</dbReference>
<dbReference type="Gene3D" id="1.10.1610.10">
    <property type="match status" value="1"/>
</dbReference>
<dbReference type="Gene3D" id="3.40.50.10210">
    <property type="match status" value="1"/>
</dbReference>
<dbReference type="HAMAP" id="MF_00230">
    <property type="entry name" value="CobT"/>
    <property type="match status" value="1"/>
</dbReference>
<dbReference type="InterPro" id="IPR003200">
    <property type="entry name" value="Nict_dMeBzImd_PRibTrfase"/>
</dbReference>
<dbReference type="InterPro" id="IPR017846">
    <property type="entry name" value="Nict_dMeBzImd_PRibTrfase_bact"/>
</dbReference>
<dbReference type="InterPro" id="IPR023195">
    <property type="entry name" value="Nict_dMeBzImd_PRibTrfase_N"/>
</dbReference>
<dbReference type="InterPro" id="IPR036087">
    <property type="entry name" value="Nict_dMeBzImd_PRibTrfase_sf"/>
</dbReference>
<dbReference type="NCBIfam" id="TIGR03160">
    <property type="entry name" value="cobT_DBIPRT"/>
    <property type="match status" value="1"/>
</dbReference>
<dbReference type="NCBIfam" id="NF000996">
    <property type="entry name" value="PRK00105.1"/>
    <property type="match status" value="1"/>
</dbReference>
<dbReference type="PANTHER" id="PTHR43463">
    <property type="entry name" value="NICOTINATE-NUCLEOTIDE--DIMETHYLBENZIMIDAZOLE PHOSPHORIBOSYLTRANSFERASE"/>
    <property type="match status" value="1"/>
</dbReference>
<dbReference type="PANTHER" id="PTHR43463:SF1">
    <property type="entry name" value="NICOTINATE-NUCLEOTIDE--DIMETHYLBENZIMIDAZOLE PHOSPHORIBOSYLTRANSFERASE"/>
    <property type="match status" value="1"/>
</dbReference>
<dbReference type="Pfam" id="PF02277">
    <property type="entry name" value="DBI_PRT"/>
    <property type="match status" value="1"/>
</dbReference>
<dbReference type="SUPFAM" id="SSF52733">
    <property type="entry name" value="Nicotinate mononucleotide:5,6-dimethylbenzimidazole phosphoribosyltransferase (CobT)"/>
    <property type="match status" value="1"/>
</dbReference>
<accession>Q8FNQ2</accession>
<feature type="chain" id="PRO_0000167045" description="Nicotinate-nucleotide--dimethylbenzimidazole phosphoribosyltransferase">
    <location>
        <begin position="1"/>
        <end position="368"/>
    </location>
</feature>
<feature type="region of interest" description="Disordered" evidence="2">
    <location>
        <begin position="344"/>
        <end position="368"/>
    </location>
</feature>
<feature type="compositionally biased region" description="Low complexity" evidence="2">
    <location>
        <begin position="349"/>
        <end position="360"/>
    </location>
</feature>
<feature type="active site" description="Proton acceptor" evidence="1">
    <location>
        <position position="314"/>
    </location>
</feature>
<proteinExistence type="inferred from homology"/>
<sequence length="368" mass="38169">MMVPAELFARVEFPDQQVLADAREYQNTLVKPAGSLSRLEDVGCFIAACQGQVPPRRLDRPRIVVFAGDHGVAARGVSAYPASVSLQMAQSMLDGGAAINVLARAAGASVRVADISLDHEATGPERVRRSCGSIDIEDAMTGEEVLQALQIGIRIADQEIDSGADILIPGDLGIGNTTPAAALIGTFTLAEPVVVVGRGTGIDDEGWKRKVTAVRDAMFRVRTLRQDPITVARMISSPDLTAMAAFIAQAAVRRTPVILDGAVVTAAALLANKLAPGARRWFIAGHRSPEPAHPIALDALGLTPLVDLGMRLGEGSGAAAALPLVKTAVDLMIDMSTMNDAGVDRADGADNSADSGASAGTVASDPTV</sequence>
<comment type="function">
    <text evidence="1">Catalyzes the synthesis of alpha-ribazole-5'-phosphate from nicotinate mononucleotide (NAMN) and 5,6-dimethylbenzimidazole (DMB).</text>
</comment>
<comment type="catalytic activity">
    <reaction evidence="1">
        <text>5,6-dimethylbenzimidazole + nicotinate beta-D-ribonucleotide = alpha-ribazole 5'-phosphate + nicotinate + H(+)</text>
        <dbReference type="Rhea" id="RHEA:11196"/>
        <dbReference type="ChEBI" id="CHEBI:15378"/>
        <dbReference type="ChEBI" id="CHEBI:15890"/>
        <dbReference type="ChEBI" id="CHEBI:32544"/>
        <dbReference type="ChEBI" id="CHEBI:57502"/>
        <dbReference type="ChEBI" id="CHEBI:57918"/>
        <dbReference type="EC" id="2.4.2.21"/>
    </reaction>
</comment>
<comment type="pathway">
    <text evidence="1">Nucleoside biosynthesis; alpha-ribazole biosynthesis; alpha-ribazole from 5,6-dimethylbenzimidazole: step 1/2.</text>
</comment>
<comment type="similarity">
    <text evidence="1">Belongs to the CobT family.</text>
</comment>
<gene>
    <name evidence="1" type="primary">cobT</name>
    <name type="ordered locus">CE2092</name>
</gene>